<proteinExistence type="inferred from homology"/>
<accession>Q10440</accession>
<evidence type="ECO:0000255" key="1">
    <source>
        <dbReference type="HAMAP-Rule" id="MF_03057"/>
    </source>
</evidence>
<evidence type="ECO:0000269" key="2">
    <source>
    </source>
</evidence>
<evidence type="ECO:0000312" key="3">
    <source>
        <dbReference type="PomBase" id="SPAC12B10.06c"/>
    </source>
</evidence>
<feature type="transit peptide" description="Mitochondrion" evidence="1">
    <location>
        <begin position="1"/>
        <end position="28"/>
    </location>
</feature>
<feature type="chain" id="PRO_0000116611" description="Succinate dehydrogenase assembly factor 2, mitochondrial">
    <location>
        <begin position="29"/>
        <end position="139"/>
    </location>
</feature>
<reference key="1">
    <citation type="journal article" date="2002" name="Nature">
        <title>The genome sequence of Schizosaccharomyces pombe.</title>
        <authorList>
            <person name="Wood V."/>
            <person name="Gwilliam R."/>
            <person name="Rajandream M.A."/>
            <person name="Lyne M.H."/>
            <person name="Lyne R."/>
            <person name="Stewart A."/>
            <person name="Sgouros J.G."/>
            <person name="Peat N."/>
            <person name="Hayles J."/>
            <person name="Baker S.G."/>
            <person name="Basham D."/>
            <person name="Bowman S."/>
            <person name="Brooks K."/>
            <person name="Brown D."/>
            <person name="Brown S."/>
            <person name="Chillingworth T."/>
            <person name="Churcher C.M."/>
            <person name="Collins M."/>
            <person name="Connor R."/>
            <person name="Cronin A."/>
            <person name="Davis P."/>
            <person name="Feltwell T."/>
            <person name="Fraser A."/>
            <person name="Gentles S."/>
            <person name="Goble A."/>
            <person name="Hamlin N."/>
            <person name="Harris D.E."/>
            <person name="Hidalgo J."/>
            <person name="Hodgson G."/>
            <person name="Holroyd S."/>
            <person name="Hornsby T."/>
            <person name="Howarth S."/>
            <person name="Huckle E.J."/>
            <person name="Hunt S."/>
            <person name="Jagels K."/>
            <person name="James K.D."/>
            <person name="Jones L."/>
            <person name="Jones M."/>
            <person name="Leather S."/>
            <person name="McDonald S."/>
            <person name="McLean J."/>
            <person name="Mooney P."/>
            <person name="Moule S."/>
            <person name="Mungall K.L."/>
            <person name="Murphy L.D."/>
            <person name="Niblett D."/>
            <person name="Odell C."/>
            <person name="Oliver K."/>
            <person name="O'Neil S."/>
            <person name="Pearson D."/>
            <person name="Quail M.A."/>
            <person name="Rabbinowitsch E."/>
            <person name="Rutherford K.M."/>
            <person name="Rutter S."/>
            <person name="Saunders D."/>
            <person name="Seeger K."/>
            <person name="Sharp S."/>
            <person name="Skelton J."/>
            <person name="Simmonds M.N."/>
            <person name="Squares R."/>
            <person name="Squares S."/>
            <person name="Stevens K."/>
            <person name="Taylor K."/>
            <person name="Taylor R.G."/>
            <person name="Tivey A."/>
            <person name="Walsh S.V."/>
            <person name="Warren T."/>
            <person name="Whitehead S."/>
            <person name="Woodward J.R."/>
            <person name="Volckaert G."/>
            <person name="Aert R."/>
            <person name="Robben J."/>
            <person name="Grymonprez B."/>
            <person name="Weltjens I."/>
            <person name="Vanstreels E."/>
            <person name="Rieger M."/>
            <person name="Schaefer M."/>
            <person name="Mueller-Auer S."/>
            <person name="Gabel C."/>
            <person name="Fuchs M."/>
            <person name="Duesterhoeft A."/>
            <person name="Fritzc C."/>
            <person name="Holzer E."/>
            <person name="Moestl D."/>
            <person name="Hilbert H."/>
            <person name="Borzym K."/>
            <person name="Langer I."/>
            <person name="Beck A."/>
            <person name="Lehrach H."/>
            <person name="Reinhardt R."/>
            <person name="Pohl T.M."/>
            <person name="Eger P."/>
            <person name="Zimmermann W."/>
            <person name="Wedler H."/>
            <person name="Wambutt R."/>
            <person name="Purnelle B."/>
            <person name="Goffeau A."/>
            <person name="Cadieu E."/>
            <person name="Dreano S."/>
            <person name="Gloux S."/>
            <person name="Lelaure V."/>
            <person name="Mottier S."/>
            <person name="Galibert F."/>
            <person name="Aves S.J."/>
            <person name="Xiang Z."/>
            <person name="Hunt C."/>
            <person name="Moore K."/>
            <person name="Hurst S.M."/>
            <person name="Lucas M."/>
            <person name="Rochet M."/>
            <person name="Gaillardin C."/>
            <person name="Tallada V.A."/>
            <person name="Garzon A."/>
            <person name="Thode G."/>
            <person name="Daga R.R."/>
            <person name="Cruzado L."/>
            <person name="Jimenez J."/>
            <person name="Sanchez M."/>
            <person name="del Rey F."/>
            <person name="Benito J."/>
            <person name="Dominguez A."/>
            <person name="Revuelta J.L."/>
            <person name="Moreno S."/>
            <person name="Armstrong J."/>
            <person name="Forsburg S.L."/>
            <person name="Cerutti L."/>
            <person name="Lowe T."/>
            <person name="McCombie W.R."/>
            <person name="Paulsen I."/>
            <person name="Potashkin J."/>
            <person name="Shpakovski G.V."/>
            <person name="Ussery D."/>
            <person name="Barrell B.G."/>
            <person name="Nurse P."/>
        </authorList>
    </citation>
    <scope>NUCLEOTIDE SEQUENCE [LARGE SCALE GENOMIC DNA]</scope>
    <source>
        <strain>972 / ATCC 24843</strain>
    </source>
</reference>
<reference key="2">
    <citation type="journal article" date="2006" name="Nat. Biotechnol.">
        <title>ORFeome cloning and global analysis of protein localization in the fission yeast Schizosaccharomyces pombe.</title>
        <authorList>
            <person name="Matsuyama A."/>
            <person name="Arai R."/>
            <person name="Yashiroda Y."/>
            <person name="Shirai A."/>
            <person name="Kamata A."/>
            <person name="Sekido S."/>
            <person name="Kobayashi Y."/>
            <person name="Hashimoto A."/>
            <person name="Hamamoto M."/>
            <person name="Hiraoka Y."/>
            <person name="Horinouchi S."/>
            <person name="Yoshida M."/>
        </authorList>
    </citation>
    <scope>SUBCELLULAR LOCATION [LARGE SCALE ANALYSIS]</scope>
</reference>
<organism>
    <name type="scientific">Schizosaccharomyces pombe (strain 972 / ATCC 24843)</name>
    <name type="common">Fission yeast</name>
    <dbReference type="NCBI Taxonomy" id="284812"/>
    <lineage>
        <taxon>Eukaryota</taxon>
        <taxon>Fungi</taxon>
        <taxon>Dikarya</taxon>
        <taxon>Ascomycota</taxon>
        <taxon>Taphrinomycotina</taxon>
        <taxon>Schizosaccharomycetes</taxon>
        <taxon>Schizosaccharomycetales</taxon>
        <taxon>Schizosaccharomycetaceae</taxon>
        <taxon>Schizosaccharomyces</taxon>
    </lineage>
</organism>
<name>SDHF2_SCHPO</name>
<keyword id="KW-0143">Chaperone</keyword>
<keyword id="KW-0496">Mitochondrion</keyword>
<keyword id="KW-1185">Reference proteome</keyword>
<keyword id="KW-0809">Transit peptide</keyword>
<gene>
    <name evidence="3" type="primary">emi5</name>
    <name evidence="3" type="ORF">SPAC12B10.06c</name>
</gene>
<protein>
    <recommendedName>
        <fullName evidence="1">Succinate dehydrogenase assembly factor 2, mitochondrial</fullName>
        <shortName evidence="1">SDH assembly factor 2</shortName>
        <shortName evidence="1">SDHAF2</shortName>
    </recommendedName>
</protein>
<sequence length="139" mass="16764">MLRKTNLSNITTLLRSARCMNRMPQLRFEHTKGDLKRVNRSYETRDAMLARLKYQSRKRGILETDLLLSNFAKDQIDKYPVSLLREYDQLLDEPDWDILYWCSGEREAPEKWKSSQVFKELSKYCRSQRNHTLRMPELF</sequence>
<comment type="function">
    <text evidence="1">Plays an essential role in the assembly of succinate dehydrogenase (SDH), an enzyme complex (also referred to as respiratory complex II) that is a component of both the tricarboxylic acid (TCA) cycle and the mitochondrial electron transport chain, and which couples the oxidation of succinate to fumarate with the reduction of ubiquinone (coenzyme Q) to ubiquinol. Required for flavinylation (covalent attachment of FAD) of the flavoprotein subunit of the SDH catalytic dimer.</text>
</comment>
<comment type="subunit">
    <text evidence="1">Interacts with the flavoprotein subunit within the SDH catalytic dimer.</text>
</comment>
<comment type="subcellular location">
    <subcellularLocation>
        <location evidence="2">Mitochondrion</location>
    </subcellularLocation>
    <subcellularLocation>
        <location evidence="1">Mitochondrion matrix</location>
    </subcellularLocation>
</comment>
<comment type="similarity">
    <text evidence="1">Belongs to the SDHAF2 family.</text>
</comment>
<dbReference type="EMBL" id="CU329670">
    <property type="protein sequence ID" value="CAA94696.1"/>
    <property type="molecule type" value="Genomic_DNA"/>
</dbReference>
<dbReference type="PIR" id="T37573">
    <property type="entry name" value="T37573"/>
</dbReference>
<dbReference type="RefSeq" id="NP_594638.1">
    <property type="nucleotide sequence ID" value="NM_001020066.2"/>
</dbReference>
<dbReference type="SMR" id="Q10440"/>
<dbReference type="BioGRID" id="279158">
    <property type="interactions" value="6"/>
</dbReference>
<dbReference type="FunCoup" id="Q10440">
    <property type="interactions" value="431"/>
</dbReference>
<dbReference type="STRING" id="284812.Q10440"/>
<dbReference type="PaxDb" id="4896-SPAC12B10.06c.1"/>
<dbReference type="EnsemblFungi" id="SPAC12B10.06c.1">
    <property type="protein sequence ID" value="SPAC12B10.06c.1:pep"/>
    <property type="gene ID" value="SPAC12B10.06c"/>
</dbReference>
<dbReference type="GeneID" id="2542705"/>
<dbReference type="KEGG" id="spo:2542705"/>
<dbReference type="PomBase" id="SPAC12B10.06c">
    <property type="gene designation" value="emi5"/>
</dbReference>
<dbReference type="VEuPathDB" id="FungiDB:SPAC12B10.06c"/>
<dbReference type="eggNOG" id="KOG3326">
    <property type="taxonomic scope" value="Eukaryota"/>
</dbReference>
<dbReference type="HOGENOM" id="CLU_103054_0_1_1"/>
<dbReference type="InParanoid" id="Q10440"/>
<dbReference type="OMA" id="HMEWDLF"/>
<dbReference type="PhylomeDB" id="Q10440"/>
<dbReference type="Reactome" id="R-SPO-9854311">
    <property type="pathway name" value="Maturation of TCA enzymes and regulation of TCA cycle"/>
</dbReference>
<dbReference type="PRO" id="PR:Q10440"/>
<dbReference type="Proteomes" id="UP000002485">
    <property type="component" value="Chromosome I"/>
</dbReference>
<dbReference type="GO" id="GO:0005759">
    <property type="term" value="C:mitochondrial matrix"/>
    <property type="evidence" value="ECO:0000250"/>
    <property type="project" value="UniProtKB"/>
</dbReference>
<dbReference type="GO" id="GO:0005739">
    <property type="term" value="C:mitochondrion"/>
    <property type="evidence" value="ECO:0007005"/>
    <property type="project" value="PomBase"/>
</dbReference>
<dbReference type="GO" id="GO:0006121">
    <property type="term" value="P:mitochondrial electron transport, succinate to ubiquinone"/>
    <property type="evidence" value="ECO:0007669"/>
    <property type="project" value="UniProtKB-UniRule"/>
</dbReference>
<dbReference type="GO" id="GO:0034553">
    <property type="term" value="P:mitochondrial respiratory chain complex II assembly"/>
    <property type="evidence" value="ECO:0000266"/>
    <property type="project" value="PomBase"/>
</dbReference>
<dbReference type="GO" id="GO:0018293">
    <property type="term" value="P:protein-FAD linkage"/>
    <property type="evidence" value="ECO:0000250"/>
    <property type="project" value="UniProtKB"/>
</dbReference>
<dbReference type="FunFam" id="1.10.150.250:FF:000009">
    <property type="match status" value="1"/>
</dbReference>
<dbReference type="Gene3D" id="1.10.150.250">
    <property type="entry name" value="Flavinator of succinate dehydrogenase"/>
    <property type="match status" value="1"/>
</dbReference>
<dbReference type="HAMAP" id="MF_03057">
    <property type="entry name" value="SDHAF2"/>
    <property type="match status" value="1"/>
</dbReference>
<dbReference type="InterPro" id="IPR005631">
    <property type="entry name" value="SDH"/>
</dbReference>
<dbReference type="InterPro" id="IPR036714">
    <property type="entry name" value="SDH_sf"/>
</dbReference>
<dbReference type="InterPro" id="IPR028882">
    <property type="entry name" value="SDHAF2"/>
</dbReference>
<dbReference type="PANTHER" id="PTHR12469">
    <property type="entry name" value="PROTEIN EMI5 HOMOLOG, MITOCHONDRIAL"/>
    <property type="match status" value="1"/>
</dbReference>
<dbReference type="PANTHER" id="PTHR12469:SF2">
    <property type="entry name" value="SUCCINATE DEHYDROGENASE ASSEMBLY FACTOR 2, MITOCHONDRIAL"/>
    <property type="match status" value="1"/>
</dbReference>
<dbReference type="Pfam" id="PF03937">
    <property type="entry name" value="Sdh5"/>
    <property type="match status" value="1"/>
</dbReference>
<dbReference type="SUPFAM" id="SSF109910">
    <property type="entry name" value="YgfY-like"/>
    <property type="match status" value="1"/>
</dbReference>